<name>OR47B_DROME</name>
<accession>P81922</accession>
<accession>Q9V5X4</accession>
<evidence type="ECO:0000250" key="1"/>
<evidence type="ECO:0000255" key="2"/>
<evidence type="ECO:0000269" key="3">
    <source>
    </source>
</evidence>
<evidence type="ECO:0000269" key="4">
    <source>
    </source>
</evidence>
<evidence type="ECO:0000269" key="5">
    <source>
    </source>
</evidence>
<evidence type="ECO:0000269" key="6">
    <source>
    </source>
</evidence>
<evidence type="ECO:0000269" key="7">
    <source>
    </source>
</evidence>
<evidence type="ECO:0000269" key="8">
    <source>
    </source>
</evidence>
<evidence type="ECO:0000305" key="9"/>
<reference key="1">
    <citation type="journal article" date="2000" name="Science">
        <title>The genome sequence of Drosophila melanogaster.</title>
        <authorList>
            <person name="Adams M.D."/>
            <person name="Celniker S.E."/>
            <person name="Holt R.A."/>
            <person name="Evans C.A."/>
            <person name="Gocayne J.D."/>
            <person name="Amanatides P.G."/>
            <person name="Scherer S.E."/>
            <person name="Li P.W."/>
            <person name="Hoskins R.A."/>
            <person name="Galle R.F."/>
            <person name="George R.A."/>
            <person name="Lewis S.E."/>
            <person name="Richards S."/>
            <person name="Ashburner M."/>
            <person name="Henderson S.N."/>
            <person name="Sutton G.G."/>
            <person name="Wortman J.R."/>
            <person name="Yandell M.D."/>
            <person name="Zhang Q."/>
            <person name="Chen L.X."/>
            <person name="Brandon R.C."/>
            <person name="Rogers Y.-H.C."/>
            <person name="Blazej R.G."/>
            <person name="Champe M."/>
            <person name="Pfeiffer B.D."/>
            <person name="Wan K.H."/>
            <person name="Doyle C."/>
            <person name="Baxter E.G."/>
            <person name="Helt G."/>
            <person name="Nelson C.R."/>
            <person name="Miklos G.L.G."/>
            <person name="Abril J.F."/>
            <person name="Agbayani A."/>
            <person name="An H.-J."/>
            <person name="Andrews-Pfannkoch C."/>
            <person name="Baldwin D."/>
            <person name="Ballew R.M."/>
            <person name="Basu A."/>
            <person name="Baxendale J."/>
            <person name="Bayraktaroglu L."/>
            <person name="Beasley E.M."/>
            <person name="Beeson K.Y."/>
            <person name="Benos P.V."/>
            <person name="Berman B.P."/>
            <person name="Bhandari D."/>
            <person name="Bolshakov S."/>
            <person name="Borkova D."/>
            <person name="Botchan M.R."/>
            <person name="Bouck J."/>
            <person name="Brokstein P."/>
            <person name="Brottier P."/>
            <person name="Burtis K.C."/>
            <person name="Busam D.A."/>
            <person name="Butler H."/>
            <person name="Cadieu E."/>
            <person name="Center A."/>
            <person name="Chandra I."/>
            <person name="Cherry J.M."/>
            <person name="Cawley S."/>
            <person name="Dahlke C."/>
            <person name="Davenport L.B."/>
            <person name="Davies P."/>
            <person name="de Pablos B."/>
            <person name="Delcher A."/>
            <person name="Deng Z."/>
            <person name="Mays A.D."/>
            <person name="Dew I."/>
            <person name="Dietz S.M."/>
            <person name="Dodson K."/>
            <person name="Doup L.E."/>
            <person name="Downes M."/>
            <person name="Dugan-Rocha S."/>
            <person name="Dunkov B.C."/>
            <person name="Dunn P."/>
            <person name="Durbin K.J."/>
            <person name="Evangelista C.C."/>
            <person name="Ferraz C."/>
            <person name="Ferriera S."/>
            <person name="Fleischmann W."/>
            <person name="Fosler C."/>
            <person name="Gabrielian A.E."/>
            <person name="Garg N.S."/>
            <person name="Gelbart W.M."/>
            <person name="Glasser K."/>
            <person name="Glodek A."/>
            <person name="Gong F."/>
            <person name="Gorrell J.H."/>
            <person name="Gu Z."/>
            <person name="Guan P."/>
            <person name="Harris M."/>
            <person name="Harris N.L."/>
            <person name="Harvey D.A."/>
            <person name="Heiman T.J."/>
            <person name="Hernandez J.R."/>
            <person name="Houck J."/>
            <person name="Hostin D."/>
            <person name="Houston K.A."/>
            <person name="Howland T.J."/>
            <person name="Wei M.-H."/>
            <person name="Ibegwam C."/>
            <person name="Jalali M."/>
            <person name="Kalush F."/>
            <person name="Karpen G.H."/>
            <person name="Ke Z."/>
            <person name="Kennison J.A."/>
            <person name="Ketchum K.A."/>
            <person name="Kimmel B.E."/>
            <person name="Kodira C.D."/>
            <person name="Kraft C.L."/>
            <person name="Kravitz S."/>
            <person name="Kulp D."/>
            <person name="Lai Z."/>
            <person name="Lasko P."/>
            <person name="Lei Y."/>
            <person name="Levitsky A.A."/>
            <person name="Li J.H."/>
            <person name="Li Z."/>
            <person name="Liang Y."/>
            <person name="Lin X."/>
            <person name="Liu X."/>
            <person name="Mattei B."/>
            <person name="McIntosh T.C."/>
            <person name="McLeod M.P."/>
            <person name="McPherson D."/>
            <person name="Merkulov G."/>
            <person name="Milshina N.V."/>
            <person name="Mobarry C."/>
            <person name="Morris J."/>
            <person name="Moshrefi A."/>
            <person name="Mount S.M."/>
            <person name="Moy M."/>
            <person name="Murphy B."/>
            <person name="Murphy L."/>
            <person name="Muzny D.M."/>
            <person name="Nelson D.L."/>
            <person name="Nelson D.R."/>
            <person name="Nelson K.A."/>
            <person name="Nixon K."/>
            <person name="Nusskern D.R."/>
            <person name="Pacleb J.M."/>
            <person name="Palazzolo M."/>
            <person name="Pittman G.S."/>
            <person name="Pan S."/>
            <person name="Pollard J."/>
            <person name="Puri V."/>
            <person name="Reese M.G."/>
            <person name="Reinert K."/>
            <person name="Remington K."/>
            <person name="Saunders R.D.C."/>
            <person name="Scheeler F."/>
            <person name="Shen H."/>
            <person name="Shue B.C."/>
            <person name="Siden-Kiamos I."/>
            <person name="Simpson M."/>
            <person name="Skupski M.P."/>
            <person name="Smith T.J."/>
            <person name="Spier E."/>
            <person name="Spradling A.C."/>
            <person name="Stapleton M."/>
            <person name="Strong R."/>
            <person name="Sun E."/>
            <person name="Svirskas R."/>
            <person name="Tector C."/>
            <person name="Turner R."/>
            <person name="Venter E."/>
            <person name="Wang A.H."/>
            <person name="Wang X."/>
            <person name="Wang Z.-Y."/>
            <person name="Wassarman D.A."/>
            <person name="Weinstock G.M."/>
            <person name="Weissenbach J."/>
            <person name="Williams S.M."/>
            <person name="Woodage T."/>
            <person name="Worley K.C."/>
            <person name="Wu D."/>
            <person name="Yang S."/>
            <person name="Yao Q.A."/>
            <person name="Ye J."/>
            <person name="Yeh R.-F."/>
            <person name="Zaveri J.S."/>
            <person name="Zhan M."/>
            <person name="Zhang G."/>
            <person name="Zhao Q."/>
            <person name="Zheng L."/>
            <person name="Zheng X.H."/>
            <person name="Zhong F.N."/>
            <person name="Zhong W."/>
            <person name="Zhou X."/>
            <person name="Zhu S.C."/>
            <person name="Zhu X."/>
            <person name="Smith H.O."/>
            <person name="Gibbs R.A."/>
            <person name="Myers E.W."/>
            <person name="Rubin G.M."/>
            <person name="Venter J.C."/>
        </authorList>
    </citation>
    <scope>NUCLEOTIDE SEQUENCE [LARGE SCALE GENOMIC DNA]</scope>
    <source>
        <strain>Berkeley</strain>
    </source>
</reference>
<reference key="2">
    <citation type="journal article" date="2002" name="Genome Biol.">
        <title>Annotation of the Drosophila melanogaster euchromatic genome: a systematic review.</title>
        <authorList>
            <person name="Misra S."/>
            <person name="Crosby M.A."/>
            <person name="Mungall C.J."/>
            <person name="Matthews B.B."/>
            <person name="Campbell K.S."/>
            <person name="Hradecky P."/>
            <person name="Huang Y."/>
            <person name="Kaminker J.S."/>
            <person name="Millburn G.H."/>
            <person name="Prochnik S.E."/>
            <person name="Smith C.D."/>
            <person name="Tupy J.L."/>
            <person name="Whitfield E.J."/>
            <person name="Bayraktaroglu L."/>
            <person name="Berman B.P."/>
            <person name="Bettencourt B.R."/>
            <person name="Celniker S.E."/>
            <person name="de Grey A.D.N.J."/>
            <person name="Drysdale R.A."/>
            <person name="Harris N.L."/>
            <person name="Richter J."/>
            <person name="Russo S."/>
            <person name="Schroeder A.J."/>
            <person name="Shu S.Q."/>
            <person name="Stapleton M."/>
            <person name="Yamada C."/>
            <person name="Ashburner M."/>
            <person name="Gelbart W.M."/>
            <person name="Rubin G.M."/>
            <person name="Lewis S.E."/>
        </authorList>
    </citation>
    <scope>GENOME REANNOTATION</scope>
    <source>
        <strain>Berkeley</strain>
    </source>
</reference>
<reference key="3">
    <citation type="journal article" date="1999" name="Neuron">
        <title>A novel family of divergent seven-transmembrane proteins: candidate odorant receptors in Drosophila.</title>
        <authorList>
            <person name="Clyne P.J."/>
            <person name="Warr C.G."/>
            <person name="Freeman M.R."/>
            <person name="Lessing D."/>
            <person name="Kim J."/>
            <person name="Carlson J.R."/>
        </authorList>
    </citation>
    <scope>TISSUE SPECIFICITY</scope>
</reference>
<reference key="4">
    <citation type="journal article" date="2000" name="Cell">
        <title>An olfactory sensory map in the fly brain.</title>
        <authorList>
            <person name="Vosshall L.B."/>
            <person name="Wong A.M."/>
            <person name="Axel R."/>
        </authorList>
    </citation>
    <scope>TISSUE SPECIFICITY</scope>
</reference>
<reference key="5">
    <citation type="journal article" date="2006" name="Cell">
        <title>Coding of odors by a receptor repertoire.</title>
        <authorList>
            <person name="Hallem E.A."/>
            <person name="Carlson J.R."/>
        </authorList>
    </citation>
    <scope>FUNCTION</scope>
</reference>
<reference key="6">
    <citation type="journal article" date="2011" name="Nat. Neurosci.">
        <title>Hierarchical chemosensory regulation of male-male social interactions in Drosophila.</title>
        <authorList>
            <person name="Wang L."/>
            <person name="Han X."/>
            <person name="Mehren J."/>
            <person name="Hiroi M."/>
            <person name="Billeter J.C."/>
            <person name="Miyamoto T."/>
            <person name="Amrein H."/>
            <person name="Levine J.D."/>
            <person name="Anderson D.J."/>
        </authorList>
    </citation>
    <scope>FUNCTION</scope>
</reference>
<reference key="7">
    <citation type="journal article" date="2012" name="J. Biol. Rhythms">
        <title>Or47b receptor neurons mediate sociosexual interactions in the fruit fly Drosophila melanogaster.</title>
        <authorList>
            <person name="Lone S.R."/>
            <person name="Sharma V.K."/>
        </authorList>
    </citation>
    <scope>FUNCTION</scope>
</reference>
<reference key="8">
    <citation type="journal article" date="2013" name="Nat. Commun.">
        <title>Select interneuron clusters determine female sexual receptivity in Drosophila.</title>
        <authorList>
            <person name="Sakurai A."/>
            <person name="Koganezawa M."/>
            <person name="Yasunaga K."/>
            <person name="Emoto K."/>
            <person name="Yamamoto D."/>
        </authorList>
    </citation>
    <scope>FUNCTION</scope>
</reference>
<protein>
    <recommendedName>
        <fullName>Odorant receptor 47b</fullName>
    </recommendedName>
</protein>
<feature type="chain" id="PRO_0000174251" description="Odorant receptor 47b">
    <location>
        <begin position="1"/>
        <end position="412"/>
    </location>
</feature>
<feature type="topological domain" description="Cytoplasmic" evidence="2">
    <location>
        <begin position="1"/>
        <end position="74"/>
    </location>
</feature>
<feature type="transmembrane region" description="Helical; Name=1" evidence="2">
    <location>
        <begin position="75"/>
        <end position="95"/>
    </location>
</feature>
<feature type="topological domain" description="Extracellular" evidence="2">
    <location>
        <begin position="96"/>
        <end position="103"/>
    </location>
</feature>
<feature type="transmembrane region" description="Helical; Name=2" evidence="2">
    <location>
        <begin position="104"/>
        <end position="124"/>
    </location>
</feature>
<feature type="topological domain" description="Cytoplasmic" evidence="2">
    <location>
        <begin position="125"/>
        <end position="169"/>
    </location>
</feature>
<feature type="transmembrane region" description="Helical; Name=3" evidence="2">
    <location>
        <begin position="170"/>
        <end position="190"/>
    </location>
</feature>
<feature type="topological domain" description="Extracellular" evidence="2">
    <location>
        <begin position="191"/>
        <end position="229"/>
    </location>
</feature>
<feature type="transmembrane region" description="Helical; Name=4" evidence="2">
    <location>
        <begin position="230"/>
        <end position="250"/>
    </location>
</feature>
<feature type="topological domain" description="Cytoplasmic" evidence="2">
    <location>
        <begin position="251"/>
        <end position="302"/>
    </location>
</feature>
<feature type="transmembrane region" description="Helical; Name=5" evidence="2">
    <location>
        <begin position="303"/>
        <end position="323"/>
    </location>
</feature>
<feature type="topological domain" description="Extracellular" evidence="2">
    <location>
        <begin position="324"/>
        <end position="330"/>
    </location>
</feature>
<feature type="transmembrane region" description="Helical; Name=6" evidence="2">
    <location>
        <begin position="331"/>
        <end position="351"/>
    </location>
</feature>
<feature type="topological domain" description="Cytoplasmic" evidence="2">
    <location>
        <begin position="352"/>
        <end position="389"/>
    </location>
</feature>
<feature type="transmembrane region" description="Helical; Name=7" evidence="2">
    <location>
        <begin position="390"/>
        <end position="410"/>
    </location>
</feature>
<feature type="topological domain" description="Extracellular" evidence="2">
    <location>
        <begin position="411"/>
        <end position="412"/>
    </location>
</feature>
<organism>
    <name type="scientific">Drosophila melanogaster</name>
    <name type="common">Fruit fly</name>
    <dbReference type="NCBI Taxonomy" id="7227"/>
    <lineage>
        <taxon>Eukaryota</taxon>
        <taxon>Metazoa</taxon>
        <taxon>Ecdysozoa</taxon>
        <taxon>Arthropoda</taxon>
        <taxon>Hexapoda</taxon>
        <taxon>Insecta</taxon>
        <taxon>Pterygota</taxon>
        <taxon>Neoptera</taxon>
        <taxon>Endopterygota</taxon>
        <taxon>Diptera</taxon>
        <taxon>Brachycera</taxon>
        <taxon>Muscomorpha</taxon>
        <taxon>Ephydroidea</taxon>
        <taxon>Drosophilidae</taxon>
        <taxon>Drosophila</taxon>
        <taxon>Sophophora</taxon>
    </lineage>
</organism>
<dbReference type="EMBL" id="AE013599">
    <property type="protein sequence ID" value="AAF58667.3"/>
    <property type="molecule type" value="Genomic_DNA"/>
</dbReference>
<dbReference type="RefSeq" id="NP_523690.3">
    <property type="nucleotide sequence ID" value="NM_078966.3"/>
</dbReference>
<dbReference type="SMR" id="P81922"/>
<dbReference type="FunCoup" id="P81922">
    <property type="interactions" value="11"/>
</dbReference>
<dbReference type="STRING" id="7227.FBpp0087262"/>
<dbReference type="PaxDb" id="7227-FBpp0087262"/>
<dbReference type="EnsemblMetazoa" id="FBtr0088166">
    <property type="protein sequence ID" value="FBpp0087262"/>
    <property type="gene ID" value="FBgn0026385"/>
</dbReference>
<dbReference type="GeneID" id="36212"/>
<dbReference type="KEGG" id="dme:Dmel_CG13206"/>
<dbReference type="AGR" id="FB:FBgn0026385"/>
<dbReference type="CTD" id="36212"/>
<dbReference type="FlyBase" id="FBgn0026385">
    <property type="gene designation" value="Or47b"/>
</dbReference>
<dbReference type="VEuPathDB" id="VectorBase:FBgn0026385"/>
<dbReference type="eggNOG" id="ENOG502SSXX">
    <property type="taxonomic scope" value="Eukaryota"/>
</dbReference>
<dbReference type="GeneTree" id="ENSGT00940000166470"/>
<dbReference type="HOGENOM" id="CLU_055891_1_0_1"/>
<dbReference type="InParanoid" id="P81922"/>
<dbReference type="OMA" id="FTLGTYM"/>
<dbReference type="OrthoDB" id="6604226at2759"/>
<dbReference type="PhylomeDB" id="P81922"/>
<dbReference type="BioGRID-ORCS" id="36212">
    <property type="hits" value="1 hit in 1 CRISPR screen"/>
</dbReference>
<dbReference type="GenomeRNAi" id="36212"/>
<dbReference type="PRO" id="PR:P81922"/>
<dbReference type="Proteomes" id="UP000000803">
    <property type="component" value="Chromosome 2R"/>
</dbReference>
<dbReference type="Bgee" id="FBgn0026385">
    <property type="expression patterns" value="Expressed in adult olfactory receptor neuron Or47b (Drosophila) in antenna and 6 other cell types or tissues"/>
</dbReference>
<dbReference type="GO" id="GO:0032590">
    <property type="term" value="C:dendrite membrane"/>
    <property type="evidence" value="ECO:0000250"/>
    <property type="project" value="FlyBase"/>
</dbReference>
<dbReference type="GO" id="GO:0016020">
    <property type="term" value="C:membrane"/>
    <property type="evidence" value="ECO:0000303"/>
    <property type="project" value="UniProtKB"/>
</dbReference>
<dbReference type="GO" id="GO:0005886">
    <property type="term" value="C:plasma membrane"/>
    <property type="evidence" value="ECO:0000318"/>
    <property type="project" value="GO_Central"/>
</dbReference>
<dbReference type="GO" id="GO:0170020">
    <property type="term" value="F:ionotropic olfactory receptor activity"/>
    <property type="evidence" value="ECO:0000315"/>
    <property type="project" value="FlyBase"/>
</dbReference>
<dbReference type="GO" id="GO:0005549">
    <property type="term" value="F:odorant binding"/>
    <property type="evidence" value="ECO:0000250"/>
    <property type="project" value="FlyBase"/>
</dbReference>
<dbReference type="GO" id="GO:0004984">
    <property type="term" value="F:olfactory receptor activity"/>
    <property type="evidence" value="ECO:0000318"/>
    <property type="project" value="GO_Central"/>
</dbReference>
<dbReference type="GO" id="GO:0050911">
    <property type="term" value="P:detection of chemical stimulus involved in sensory perception of smell"/>
    <property type="evidence" value="ECO:0007005"/>
    <property type="project" value="FlyBase"/>
</dbReference>
<dbReference type="GO" id="GO:0019236">
    <property type="term" value="P:response to pheromone"/>
    <property type="evidence" value="ECO:0000315"/>
    <property type="project" value="FlyBase"/>
</dbReference>
<dbReference type="GO" id="GO:0007608">
    <property type="term" value="P:sensory perception of smell"/>
    <property type="evidence" value="ECO:0000303"/>
    <property type="project" value="UniProtKB"/>
</dbReference>
<dbReference type="GO" id="GO:0007165">
    <property type="term" value="P:signal transduction"/>
    <property type="evidence" value="ECO:0007669"/>
    <property type="project" value="UniProtKB-KW"/>
</dbReference>
<dbReference type="InterPro" id="IPR004117">
    <property type="entry name" value="7tm6_olfct_rcpt"/>
</dbReference>
<dbReference type="PANTHER" id="PTHR21137">
    <property type="entry name" value="ODORANT RECEPTOR"/>
    <property type="match status" value="1"/>
</dbReference>
<dbReference type="PANTHER" id="PTHR21137:SF35">
    <property type="entry name" value="ODORANT RECEPTOR 19A-RELATED"/>
    <property type="match status" value="1"/>
</dbReference>
<dbReference type="Pfam" id="PF02949">
    <property type="entry name" value="7tm_6"/>
    <property type="match status" value="1"/>
</dbReference>
<proteinExistence type="evidence at transcript level"/>
<sequence>MNDSGYQSNLSLLRVFLDEFRSVLRQESPGLIPRLAFYYVRAFLSLLCQYPNKKLASLPLYRWINLFIMCNVMTIFWTMFVALPESKNVIEMGDDLVWISGMALVFTKIFYMHLRCDEIDELISDFEYYNRELRPHNIDEEVLGWQRLCYVIESGLYINCFCLVNFFSAAIFLQPLLGEGKLPFHSVYPFQWHRLDLHPYTFWFLYIWQSLTSQHNLMSILMVDMVGISTFLQTALNLKLLCIEIRKLGDMEVSDKRFHEEFCRVVRFHQHIIKLVGKANRAFNGAFNAQLMASFSLISISTFETMAAAAVDPKMAAKFVLLMLVAFIQLSLWCVSGTLVYTQSVEVAQAAFDINDWHTKSPGIQRDISFVILRAQKPLMYVAEPFLPFTLGTYMLVLKNCYRLLALMQESM</sequence>
<comment type="function">
    <text evidence="5 6 7 8">Odorant receptor which mediates acceptance or avoidance behavior, depending on its substrates. The odorant receptor repertoire encodes a large collection of odor stimuli that vary widely in identity, intensity, and duration. May form a complex with Orco to form odorant-sensing units, providing sensitive and prolonged odorant signaling and calcium permeability. Plays an important role in sociosexual interactions since its enhances courtship in a pheromone-dependent manner.</text>
</comment>
<comment type="subunit">
    <text evidence="1">Interacts with Orco. Complexes exist early in the endomembrane system in olfactory sensory neurons (OSNs), coupling these complexes to the conserved ciliary trafficking pathway (By similarity).</text>
</comment>
<comment type="subcellular location">
    <subcellularLocation>
        <location evidence="1">Cell membrane</location>
        <topology evidence="1">Multi-pass membrane protein</topology>
    </subcellularLocation>
</comment>
<comment type="tissue specificity">
    <text evidence="3 4">Expressed in olfactory sensory neurons in the antenna.</text>
</comment>
<comment type="miscellaneous">
    <text>The atypical heteromeric and topological design of the odorant receptors appears to be an insect-specific solution for odor recognition, making the OR/Orco complex an attractive target for the development of highly selective insect repellents to disrupt olfactory-mediated host-seeking behaviors of insect disease vectors. Odor-evoked OR currents are independent of known G-protein-coupled second messenger pathways.</text>
</comment>
<comment type="similarity">
    <text evidence="9">Belongs to the insect chemoreceptor superfamily. Heteromeric odorant receptor channel (TC 1.A.69) family. Or49a subfamily.</text>
</comment>
<gene>
    <name type="primary">Or47b</name>
    <name type="synonym">DOR47E.2</name>
    <name type="synonym">Or47E.2</name>
    <name type="ORF">CG13206</name>
</gene>
<keyword id="KW-1003">Cell membrane</keyword>
<keyword id="KW-0472">Membrane</keyword>
<keyword id="KW-0552">Olfaction</keyword>
<keyword id="KW-0675">Receptor</keyword>
<keyword id="KW-1185">Reference proteome</keyword>
<keyword id="KW-0716">Sensory transduction</keyword>
<keyword id="KW-0807">Transducer</keyword>
<keyword id="KW-0812">Transmembrane</keyword>
<keyword id="KW-1133">Transmembrane helix</keyword>